<name>ACSA_SHEDO</name>
<proteinExistence type="inferred from homology"/>
<evidence type="ECO:0000255" key="1">
    <source>
        <dbReference type="HAMAP-Rule" id="MF_01123"/>
    </source>
</evidence>
<comment type="function">
    <text evidence="1">Catalyzes the conversion of acetate into acetyl-CoA (AcCoA), an essential intermediate at the junction of anabolic and catabolic pathways. AcsA undergoes a two-step reaction. In the first half reaction, AcsA combines acetate with ATP to form acetyl-adenylate (AcAMP) intermediate. In the second half reaction, it can then transfer the acetyl group from AcAMP to the sulfhydryl group of CoA, forming the product AcCoA.</text>
</comment>
<comment type="catalytic activity">
    <reaction evidence="1">
        <text>acetate + ATP + CoA = acetyl-CoA + AMP + diphosphate</text>
        <dbReference type="Rhea" id="RHEA:23176"/>
        <dbReference type="ChEBI" id="CHEBI:30089"/>
        <dbReference type="ChEBI" id="CHEBI:30616"/>
        <dbReference type="ChEBI" id="CHEBI:33019"/>
        <dbReference type="ChEBI" id="CHEBI:57287"/>
        <dbReference type="ChEBI" id="CHEBI:57288"/>
        <dbReference type="ChEBI" id="CHEBI:456215"/>
        <dbReference type="EC" id="6.2.1.1"/>
    </reaction>
</comment>
<comment type="cofactor">
    <cofactor evidence="1">
        <name>Mg(2+)</name>
        <dbReference type="ChEBI" id="CHEBI:18420"/>
    </cofactor>
</comment>
<comment type="PTM">
    <text evidence="1">Acetylated. Deacetylation by the SIR2-homolog deacetylase activates the enzyme.</text>
</comment>
<comment type="similarity">
    <text evidence="1">Belongs to the ATP-dependent AMP-binding enzyme family.</text>
</comment>
<organism>
    <name type="scientific">Shewanella denitrificans (strain OS217 / ATCC BAA-1090 / DSM 15013)</name>
    <dbReference type="NCBI Taxonomy" id="318161"/>
    <lineage>
        <taxon>Bacteria</taxon>
        <taxon>Pseudomonadati</taxon>
        <taxon>Pseudomonadota</taxon>
        <taxon>Gammaproteobacteria</taxon>
        <taxon>Alteromonadales</taxon>
        <taxon>Shewanellaceae</taxon>
        <taxon>Shewanella</taxon>
    </lineage>
</organism>
<gene>
    <name evidence="1" type="primary">acsA</name>
    <name type="ordered locus">Sden_2044</name>
</gene>
<keyword id="KW-0007">Acetylation</keyword>
<keyword id="KW-0067">ATP-binding</keyword>
<keyword id="KW-0436">Ligase</keyword>
<keyword id="KW-0460">Magnesium</keyword>
<keyword id="KW-0479">Metal-binding</keyword>
<keyword id="KW-0547">Nucleotide-binding</keyword>
<keyword id="KW-1185">Reference proteome</keyword>
<feature type="chain" id="PRO_1000065318" description="Acetyl-coenzyme A synthetase">
    <location>
        <begin position="1"/>
        <end position="651"/>
    </location>
</feature>
<feature type="binding site" evidence="1">
    <location>
        <begin position="193"/>
        <end position="196"/>
    </location>
    <ligand>
        <name>CoA</name>
        <dbReference type="ChEBI" id="CHEBI:57287"/>
    </ligand>
</feature>
<feature type="binding site" evidence="1">
    <location>
        <position position="313"/>
    </location>
    <ligand>
        <name>CoA</name>
        <dbReference type="ChEBI" id="CHEBI:57287"/>
    </ligand>
</feature>
<feature type="binding site" evidence="1">
    <location>
        <position position="337"/>
    </location>
    <ligand>
        <name>CoA</name>
        <dbReference type="ChEBI" id="CHEBI:57287"/>
    </ligand>
</feature>
<feature type="binding site" evidence="1">
    <location>
        <begin position="389"/>
        <end position="391"/>
    </location>
    <ligand>
        <name>ATP</name>
        <dbReference type="ChEBI" id="CHEBI:30616"/>
    </ligand>
</feature>
<feature type="binding site" evidence="1">
    <location>
        <begin position="413"/>
        <end position="418"/>
    </location>
    <ligand>
        <name>ATP</name>
        <dbReference type="ChEBI" id="CHEBI:30616"/>
    </ligand>
</feature>
<feature type="binding site" evidence="1">
    <location>
        <position position="502"/>
    </location>
    <ligand>
        <name>ATP</name>
        <dbReference type="ChEBI" id="CHEBI:30616"/>
    </ligand>
</feature>
<feature type="binding site" evidence="1">
    <location>
        <position position="517"/>
    </location>
    <ligand>
        <name>ATP</name>
        <dbReference type="ChEBI" id="CHEBI:30616"/>
    </ligand>
</feature>
<feature type="binding site" evidence="1">
    <location>
        <position position="525"/>
    </location>
    <ligand>
        <name>CoA</name>
        <dbReference type="ChEBI" id="CHEBI:57287"/>
    </ligand>
</feature>
<feature type="binding site" evidence="1">
    <location>
        <position position="528"/>
    </location>
    <ligand>
        <name>ATP</name>
        <dbReference type="ChEBI" id="CHEBI:30616"/>
    </ligand>
</feature>
<feature type="binding site" evidence="1">
    <location>
        <position position="539"/>
    </location>
    <ligand>
        <name>Mg(2+)</name>
        <dbReference type="ChEBI" id="CHEBI:18420"/>
    </ligand>
</feature>
<feature type="binding site" evidence="1">
    <location>
        <position position="541"/>
    </location>
    <ligand>
        <name>Mg(2+)</name>
        <dbReference type="ChEBI" id="CHEBI:18420"/>
    </ligand>
</feature>
<feature type="binding site" evidence="1">
    <location>
        <position position="544"/>
    </location>
    <ligand>
        <name>Mg(2+)</name>
        <dbReference type="ChEBI" id="CHEBI:18420"/>
    </ligand>
</feature>
<feature type="binding site" evidence="1">
    <location>
        <position position="586"/>
    </location>
    <ligand>
        <name>CoA</name>
        <dbReference type="ChEBI" id="CHEBI:57287"/>
    </ligand>
</feature>
<feature type="modified residue" description="N6-acetyllysine" evidence="1">
    <location>
        <position position="611"/>
    </location>
</feature>
<dbReference type="EC" id="6.2.1.1" evidence="1"/>
<dbReference type="EMBL" id="CP000302">
    <property type="protein sequence ID" value="ABE55326.1"/>
    <property type="molecule type" value="Genomic_DNA"/>
</dbReference>
<dbReference type="RefSeq" id="WP_011496482.1">
    <property type="nucleotide sequence ID" value="NC_007954.1"/>
</dbReference>
<dbReference type="SMR" id="Q12MK0"/>
<dbReference type="STRING" id="318161.Sden_2044"/>
<dbReference type="KEGG" id="sdn:Sden_2044"/>
<dbReference type="eggNOG" id="COG0365">
    <property type="taxonomic scope" value="Bacteria"/>
</dbReference>
<dbReference type="HOGENOM" id="CLU_000022_3_6_6"/>
<dbReference type="OrthoDB" id="9803968at2"/>
<dbReference type="Proteomes" id="UP000001982">
    <property type="component" value="Chromosome"/>
</dbReference>
<dbReference type="GO" id="GO:0005829">
    <property type="term" value="C:cytosol"/>
    <property type="evidence" value="ECO:0007669"/>
    <property type="project" value="TreeGrafter"/>
</dbReference>
<dbReference type="GO" id="GO:0003987">
    <property type="term" value="F:acetate-CoA ligase activity"/>
    <property type="evidence" value="ECO:0007669"/>
    <property type="project" value="UniProtKB-UniRule"/>
</dbReference>
<dbReference type="GO" id="GO:0016208">
    <property type="term" value="F:AMP binding"/>
    <property type="evidence" value="ECO:0007669"/>
    <property type="project" value="InterPro"/>
</dbReference>
<dbReference type="GO" id="GO:0005524">
    <property type="term" value="F:ATP binding"/>
    <property type="evidence" value="ECO:0007669"/>
    <property type="project" value="UniProtKB-KW"/>
</dbReference>
<dbReference type="GO" id="GO:0046872">
    <property type="term" value="F:metal ion binding"/>
    <property type="evidence" value="ECO:0007669"/>
    <property type="project" value="UniProtKB-KW"/>
</dbReference>
<dbReference type="GO" id="GO:0019427">
    <property type="term" value="P:acetyl-CoA biosynthetic process from acetate"/>
    <property type="evidence" value="ECO:0007669"/>
    <property type="project" value="InterPro"/>
</dbReference>
<dbReference type="CDD" id="cd05966">
    <property type="entry name" value="ACS"/>
    <property type="match status" value="1"/>
</dbReference>
<dbReference type="FunFam" id="3.30.300.30:FF:000004">
    <property type="entry name" value="Acetyl-coenzyme A synthetase"/>
    <property type="match status" value="1"/>
</dbReference>
<dbReference type="FunFam" id="3.40.50.12780:FF:000001">
    <property type="entry name" value="Acetyl-coenzyme A synthetase"/>
    <property type="match status" value="1"/>
</dbReference>
<dbReference type="Gene3D" id="3.30.300.30">
    <property type="match status" value="1"/>
</dbReference>
<dbReference type="Gene3D" id="3.40.50.12780">
    <property type="entry name" value="N-terminal domain of ligase-like"/>
    <property type="match status" value="1"/>
</dbReference>
<dbReference type="HAMAP" id="MF_01123">
    <property type="entry name" value="Ac_CoA_synth"/>
    <property type="match status" value="1"/>
</dbReference>
<dbReference type="InterPro" id="IPR011904">
    <property type="entry name" value="Ac_CoA_lig"/>
</dbReference>
<dbReference type="InterPro" id="IPR032387">
    <property type="entry name" value="ACAS_N"/>
</dbReference>
<dbReference type="InterPro" id="IPR025110">
    <property type="entry name" value="AMP-bd_C"/>
</dbReference>
<dbReference type="InterPro" id="IPR045851">
    <property type="entry name" value="AMP-bd_C_sf"/>
</dbReference>
<dbReference type="InterPro" id="IPR020845">
    <property type="entry name" value="AMP-binding_CS"/>
</dbReference>
<dbReference type="InterPro" id="IPR000873">
    <property type="entry name" value="AMP-dep_synth/lig_dom"/>
</dbReference>
<dbReference type="InterPro" id="IPR042099">
    <property type="entry name" value="ANL_N_sf"/>
</dbReference>
<dbReference type="NCBIfam" id="TIGR02188">
    <property type="entry name" value="Ac_CoA_lig_AcsA"/>
    <property type="match status" value="1"/>
</dbReference>
<dbReference type="NCBIfam" id="NF001208">
    <property type="entry name" value="PRK00174.1"/>
    <property type="match status" value="1"/>
</dbReference>
<dbReference type="PANTHER" id="PTHR24095">
    <property type="entry name" value="ACETYL-COENZYME A SYNTHETASE"/>
    <property type="match status" value="1"/>
</dbReference>
<dbReference type="PANTHER" id="PTHR24095:SF243">
    <property type="entry name" value="ACETYL-COENZYME A SYNTHETASE"/>
    <property type="match status" value="1"/>
</dbReference>
<dbReference type="Pfam" id="PF16177">
    <property type="entry name" value="ACAS_N"/>
    <property type="match status" value="1"/>
</dbReference>
<dbReference type="Pfam" id="PF00501">
    <property type="entry name" value="AMP-binding"/>
    <property type="match status" value="1"/>
</dbReference>
<dbReference type="Pfam" id="PF13193">
    <property type="entry name" value="AMP-binding_C"/>
    <property type="match status" value="1"/>
</dbReference>
<dbReference type="SUPFAM" id="SSF56801">
    <property type="entry name" value="Acetyl-CoA synthetase-like"/>
    <property type="match status" value="1"/>
</dbReference>
<dbReference type="PROSITE" id="PS00455">
    <property type="entry name" value="AMP_BINDING"/>
    <property type="match status" value="1"/>
</dbReference>
<protein>
    <recommendedName>
        <fullName evidence="1">Acetyl-coenzyme A synthetase</fullName>
        <shortName evidence="1">AcCoA synthetase</shortName>
        <shortName evidence="1">Acs</shortName>
        <ecNumber evidence="1">6.2.1.1</ecNumber>
    </recommendedName>
    <alternativeName>
        <fullName evidence="1">Acetate--CoA ligase</fullName>
    </alternativeName>
    <alternativeName>
        <fullName evidence="1">Acyl-activating enzyme</fullName>
    </alternativeName>
</protein>
<reference key="1">
    <citation type="submission" date="2006-03" db="EMBL/GenBank/DDBJ databases">
        <title>Complete sequence of Shewanella denitrificans OS217.</title>
        <authorList>
            <consortium name="US DOE Joint Genome Institute"/>
            <person name="Copeland A."/>
            <person name="Lucas S."/>
            <person name="Lapidus A."/>
            <person name="Barry K."/>
            <person name="Detter J.C."/>
            <person name="Glavina del Rio T."/>
            <person name="Hammon N."/>
            <person name="Israni S."/>
            <person name="Dalin E."/>
            <person name="Tice H."/>
            <person name="Pitluck S."/>
            <person name="Brettin T."/>
            <person name="Bruce D."/>
            <person name="Han C."/>
            <person name="Tapia R."/>
            <person name="Gilna P."/>
            <person name="Kiss H."/>
            <person name="Schmutz J."/>
            <person name="Larimer F."/>
            <person name="Land M."/>
            <person name="Hauser L."/>
            <person name="Kyrpides N."/>
            <person name="Lykidis A."/>
            <person name="Richardson P."/>
        </authorList>
    </citation>
    <scope>NUCLEOTIDE SEQUENCE [LARGE SCALE GENOMIC DNA]</scope>
    <source>
        <strain>OS217 / ATCC BAA-1090 / DSM 15013</strain>
    </source>
</reference>
<accession>Q12MK0</accession>
<sequence length="651" mass="71949">MNSPTVYPVPSQISAHAHIDEQTYQRMYQASIDNPERFWGEQGKRIDWITPYSQTQVKKTSFDANNLSIQWFADGTLNASSNCLDRHLERNGDKIAILWEGDDAKEQRQLSYRELHTQVCQFANVLKAQGVVKGDIVTLYMPMVPEAAVAMLACARIGAVHSVIFGGFSPDSIASRVIDGKSKVIITADEGIRAGRTIPLKHNVDEALARPSVTCVNNVIVLKRTGANVDWQQGRDLDWDELMAGVSSDCPAEEMNAEDPLFLLYTSGSTGNPKGVLHTTGGYLVYAAMTHEYVFDYKENEVYWCTADVGWITGHSYMVYGPFANGATVLMHEGVPNYPTPARLGEIVDRHKVNILYTAPTLIRALMAEGKEHFNGFSGESLRIMGSVGEPINPEAWRWYHEVIGHEHCPIVDTWWQTETGGILISPLPGAIATKPGSATRPFFGVKPAIVDSTGQILEGAVEGNLVMLDSWPGQMRTVYGDHARFALTYFSTFKGMYFTGDGARRDEDGYYWITGRVDDVINVSGHRLGTAEVESALVAHEQVAEAAVVGYPHDIKGQGIYAYVTLVHDAEPSEALRQELRQWVRKEIGALATPDLIQWATGLPKTRSGKIMRRFLRKIAANEVTNLGDSSTLADPSVIDTLIASRLNQR</sequence>